<protein>
    <recommendedName>
        <fullName evidence="1">Acetate kinase</fullName>
        <ecNumber evidence="1">2.7.2.1</ecNumber>
    </recommendedName>
    <alternativeName>
        <fullName evidence="1">Acetokinase</fullName>
    </alternativeName>
</protein>
<sequence>MKVLVINAGSSSLKYQLIDMINESPLAVGLCERVGIDNSIITQKRFDGKKLEKQVDLPTHRVALEEVVKALTDPEFGVITDMGEINAVGHRVVHGGEKFTTSALFDAGVEEAIRDCFDLAPLHNPPNMMGISACAEIMPGTPMVIVFDTAFHQTMPAYAYMYALPYDLYEKYGVRKYGFHGTSHKYVAGRAALMLGKPIEDTKIITCHLGNGSSIAAVKGGKSIDTSMGFTPLEGVAMGTRCGSIDPAVVPFVMDKESLSSREVDTLMNKKSGVLGVSGISNDFRDLDEAASHGNERAELALEIFAYSVKRVIGEYLAVLNGADAIVFTAGIGENSASIRKRILTGLEGLGIKIDEEKNKIRGQEIDISTPDSSIRVFVIPTNEELAIARETKEIVETEAKLRKSVPV</sequence>
<dbReference type="EC" id="2.7.2.1" evidence="1"/>
<dbReference type="EMBL" id="CP000099">
    <property type="protein sequence ID" value="AAZ70761.1"/>
    <property type="molecule type" value="Genomic_DNA"/>
</dbReference>
<dbReference type="SMR" id="Q46BI1"/>
<dbReference type="STRING" id="269797.Mbar_A1820"/>
<dbReference type="PaxDb" id="269797-Mbar_A1820"/>
<dbReference type="KEGG" id="mba:Mbar_A1820"/>
<dbReference type="eggNOG" id="arCOG05260">
    <property type="taxonomic scope" value="Archaea"/>
</dbReference>
<dbReference type="HOGENOM" id="CLU_020352_0_1_2"/>
<dbReference type="OrthoDB" id="131495at2157"/>
<dbReference type="UniPathway" id="UPA00340">
    <property type="reaction ID" value="UER00458"/>
</dbReference>
<dbReference type="GO" id="GO:0005737">
    <property type="term" value="C:cytoplasm"/>
    <property type="evidence" value="ECO:0007669"/>
    <property type="project" value="UniProtKB-SubCell"/>
</dbReference>
<dbReference type="GO" id="GO:0008776">
    <property type="term" value="F:acetate kinase activity"/>
    <property type="evidence" value="ECO:0007669"/>
    <property type="project" value="UniProtKB-UniRule"/>
</dbReference>
<dbReference type="GO" id="GO:0005524">
    <property type="term" value="F:ATP binding"/>
    <property type="evidence" value="ECO:0007669"/>
    <property type="project" value="UniProtKB-KW"/>
</dbReference>
<dbReference type="GO" id="GO:0000287">
    <property type="term" value="F:magnesium ion binding"/>
    <property type="evidence" value="ECO:0007669"/>
    <property type="project" value="UniProtKB-UniRule"/>
</dbReference>
<dbReference type="GO" id="GO:0006083">
    <property type="term" value="P:acetate metabolic process"/>
    <property type="evidence" value="ECO:0007669"/>
    <property type="project" value="TreeGrafter"/>
</dbReference>
<dbReference type="GO" id="GO:0006085">
    <property type="term" value="P:acetyl-CoA biosynthetic process"/>
    <property type="evidence" value="ECO:0007669"/>
    <property type="project" value="UniProtKB-UniRule"/>
</dbReference>
<dbReference type="CDD" id="cd24010">
    <property type="entry name" value="ASKHA_NBD_AcK_PK"/>
    <property type="match status" value="1"/>
</dbReference>
<dbReference type="Gene3D" id="3.30.420.40">
    <property type="match status" value="2"/>
</dbReference>
<dbReference type="HAMAP" id="MF_00020">
    <property type="entry name" value="Acetate_kinase"/>
    <property type="match status" value="1"/>
</dbReference>
<dbReference type="InterPro" id="IPR004372">
    <property type="entry name" value="Ac/propionate_kinase"/>
</dbReference>
<dbReference type="InterPro" id="IPR000890">
    <property type="entry name" value="Aliphatic_acid_kin_short-chain"/>
</dbReference>
<dbReference type="InterPro" id="IPR023865">
    <property type="entry name" value="Aliphatic_acid_kinase_CS"/>
</dbReference>
<dbReference type="InterPro" id="IPR043129">
    <property type="entry name" value="ATPase_NBD"/>
</dbReference>
<dbReference type="NCBIfam" id="TIGR00016">
    <property type="entry name" value="ackA"/>
    <property type="match status" value="1"/>
</dbReference>
<dbReference type="PANTHER" id="PTHR21060">
    <property type="entry name" value="ACETATE KINASE"/>
    <property type="match status" value="1"/>
</dbReference>
<dbReference type="PANTHER" id="PTHR21060:SF15">
    <property type="entry name" value="ACETATE KINASE-RELATED"/>
    <property type="match status" value="1"/>
</dbReference>
<dbReference type="Pfam" id="PF00871">
    <property type="entry name" value="Acetate_kinase"/>
    <property type="match status" value="1"/>
</dbReference>
<dbReference type="PIRSF" id="PIRSF000722">
    <property type="entry name" value="Acetate_prop_kin"/>
    <property type="match status" value="1"/>
</dbReference>
<dbReference type="PRINTS" id="PR00471">
    <property type="entry name" value="ACETATEKNASE"/>
</dbReference>
<dbReference type="SUPFAM" id="SSF53067">
    <property type="entry name" value="Actin-like ATPase domain"/>
    <property type="match status" value="2"/>
</dbReference>
<dbReference type="PROSITE" id="PS01075">
    <property type="entry name" value="ACETATE_KINASE_1"/>
    <property type="match status" value="1"/>
</dbReference>
<dbReference type="PROSITE" id="PS01076">
    <property type="entry name" value="ACETATE_KINASE_2"/>
    <property type="match status" value="1"/>
</dbReference>
<name>ACKA_METBF</name>
<evidence type="ECO:0000255" key="1">
    <source>
        <dbReference type="HAMAP-Rule" id="MF_00020"/>
    </source>
</evidence>
<organism>
    <name type="scientific">Methanosarcina barkeri (strain Fusaro / DSM 804)</name>
    <dbReference type="NCBI Taxonomy" id="269797"/>
    <lineage>
        <taxon>Archaea</taxon>
        <taxon>Methanobacteriati</taxon>
        <taxon>Methanobacteriota</taxon>
        <taxon>Stenosarchaea group</taxon>
        <taxon>Methanomicrobia</taxon>
        <taxon>Methanosarcinales</taxon>
        <taxon>Methanosarcinaceae</taxon>
        <taxon>Methanosarcina</taxon>
    </lineage>
</organism>
<accession>Q46BI1</accession>
<comment type="function">
    <text evidence="1">Catalyzes the formation of acetyl phosphate from acetate and ATP. Can also catalyze the reverse reaction.</text>
</comment>
<comment type="catalytic activity">
    <reaction evidence="1">
        <text>acetate + ATP = acetyl phosphate + ADP</text>
        <dbReference type="Rhea" id="RHEA:11352"/>
        <dbReference type="ChEBI" id="CHEBI:22191"/>
        <dbReference type="ChEBI" id="CHEBI:30089"/>
        <dbReference type="ChEBI" id="CHEBI:30616"/>
        <dbReference type="ChEBI" id="CHEBI:456216"/>
        <dbReference type="EC" id="2.7.2.1"/>
    </reaction>
</comment>
<comment type="cofactor">
    <cofactor evidence="1">
        <name>Mg(2+)</name>
        <dbReference type="ChEBI" id="CHEBI:18420"/>
    </cofactor>
    <cofactor evidence="1">
        <name>Mn(2+)</name>
        <dbReference type="ChEBI" id="CHEBI:29035"/>
    </cofactor>
    <text evidence="1">Mg(2+). Can also accept Mn(2+).</text>
</comment>
<comment type="pathway">
    <text evidence="1">Metabolic intermediate biosynthesis; acetyl-CoA biosynthesis; acetyl-CoA from acetate: step 1/2.</text>
</comment>
<comment type="subunit">
    <text evidence="1">Homodimer.</text>
</comment>
<comment type="subcellular location">
    <subcellularLocation>
        <location evidence="1">Cytoplasm</location>
    </subcellularLocation>
</comment>
<comment type="similarity">
    <text evidence="1">Belongs to the acetokinase family.</text>
</comment>
<gene>
    <name evidence="1" type="primary">ackA</name>
    <name type="ordered locus">Mbar_A1820</name>
</gene>
<proteinExistence type="inferred from homology"/>
<reference key="1">
    <citation type="journal article" date="2006" name="J. Bacteriol.">
        <title>The Methanosarcina barkeri genome: comparative analysis with Methanosarcina acetivorans and Methanosarcina mazei reveals extensive rearrangement within methanosarcinal genomes.</title>
        <authorList>
            <person name="Maeder D.L."/>
            <person name="Anderson I."/>
            <person name="Brettin T.S."/>
            <person name="Bruce D.C."/>
            <person name="Gilna P."/>
            <person name="Han C.S."/>
            <person name="Lapidus A."/>
            <person name="Metcalf W.W."/>
            <person name="Saunders E."/>
            <person name="Tapia R."/>
            <person name="Sowers K.R."/>
        </authorList>
    </citation>
    <scope>NUCLEOTIDE SEQUENCE [LARGE SCALE GENOMIC DNA]</scope>
    <source>
        <strain>Fusaro / DSM 804</strain>
    </source>
</reference>
<feature type="chain" id="PRO_1000002240" description="Acetate kinase">
    <location>
        <begin position="1"/>
        <end position="408"/>
    </location>
</feature>
<feature type="active site" description="Proton donor/acceptor" evidence="1">
    <location>
        <position position="148"/>
    </location>
</feature>
<feature type="binding site" evidence="1">
    <location>
        <position position="7"/>
    </location>
    <ligand>
        <name>Mg(2+)</name>
        <dbReference type="ChEBI" id="CHEBI:18420"/>
    </ligand>
</feature>
<feature type="binding site" evidence="1">
    <location>
        <position position="14"/>
    </location>
    <ligand>
        <name>ATP</name>
        <dbReference type="ChEBI" id="CHEBI:30616"/>
    </ligand>
</feature>
<feature type="binding site" evidence="1">
    <location>
        <position position="91"/>
    </location>
    <ligand>
        <name>substrate</name>
    </ligand>
</feature>
<feature type="binding site" evidence="1">
    <location>
        <begin position="208"/>
        <end position="212"/>
    </location>
    <ligand>
        <name>ATP</name>
        <dbReference type="ChEBI" id="CHEBI:30616"/>
    </ligand>
</feature>
<feature type="binding site" evidence="1">
    <location>
        <begin position="283"/>
        <end position="285"/>
    </location>
    <ligand>
        <name>ATP</name>
        <dbReference type="ChEBI" id="CHEBI:30616"/>
    </ligand>
</feature>
<feature type="binding site" evidence="1">
    <location>
        <begin position="331"/>
        <end position="335"/>
    </location>
    <ligand>
        <name>ATP</name>
        <dbReference type="ChEBI" id="CHEBI:30616"/>
    </ligand>
</feature>
<feature type="binding site" evidence="1">
    <location>
        <position position="384"/>
    </location>
    <ligand>
        <name>Mg(2+)</name>
        <dbReference type="ChEBI" id="CHEBI:18420"/>
    </ligand>
</feature>
<feature type="site" description="Transition state stabilizer" evidence="1">
    <location>
        <position position="180"/>
    </location>
</feature>
<feature type="site" description="Transition state stabilizer" evidence="1">
    <location>
        <position position="241"/>
    </location>
</feature>
<keyword id="KW-0067">ATP-binding</keyword>
<keyword id="KW-0963">Cytoplasm</keyword>
<keyword id="KW-0418">Kinase</keyword>
<keyword id="KW-0460">Magnesium</keyword>
<keyword id="KW-0479">Metal-binding</keyword>
<keyword id="KW-0547">Nucleotide-binding</keyword>
<keyword id="KW-0808">Transferase</keyword>